<name>F200A_MACFA</name>
<dbReference type="EMBL" id="AB169141">
    <property type="protein sequence ID" value="BAE01234.1"/>
    <property type="molecule type" value="mRNA"/>
</dbReference>
<dbReference type="RefSeq" id="NP_001270512.1">
    <property type="nucleotide sequence ID" value="NM_001283583.1"/>
</dbReference>
<dbReference type="RefSeq" id="XP_005549254.1">
    <property type="nucleotide sequence ID" value="XM_005549197.2"/>
</dbReference>
<dbReference type="RefSeq" id="XP_005549255.1">
    <property type="nucleotide sequence ID" value="XM_005549198.2"/>
</dbReference>
<dbReference type="RefSeq" id="XP_005549256.1">
    <property type="nucleotide sequence ID" value="XM_005549199.2"/>
</dbReference>
<dbReference type="GeneID" id="101926726"/>
<dbReference type="KEGG" id="mcf:101926726"/>
<dbReference type="CTD" id="221786"/>
<dbReference type="VEuPathDB" id="HostDB:ENSMFAG00000030317"/>
<dbReference type="eggNOG" id="ENOG502SICS">
    <property type="taxonomic scope" value="Eukaryota"/>
</dbReference>
<dbReference type="OMA" id="FTLRNYY"/>
<dbReference type="Proteomes" id="UP000233100">
    <property type="component" value="Chromosome 3"/>
</dbReference>
<dbReference type="GO" id="GO:0016020">
    <property type="term" value="C:membrane"/>
    <property type="evidence" value="ECO:0007669"/>
    <property type="project" value="UniProtKB-SubCell"/>
</dbReference>
<dbReference type="InterPro" id="IPR012337">
    <property type="entry name" value="RNaseH-like_sf"/>
</dbReference>
<dbReference type="PANTHER" id="PTHR45913">
    <property type="entry name" value="EPM2A-INTERACTING PROTEIN 1"/>
    <property type="match status" value="1"/>
</dbReference>
<dbReference type="PANTHER" id="PTHR45913:SF19">
    <property type="entry name" value="LOW QUALITY PROTEIN: ZINC FINGER BED DOMAIN-CONTAINING PROTEIN 5-LIKE"/>
    <property type="match status" value="1"/>
</dbReference>
<dbReference type="SUPFAM" id="SSF53098">
    <property type="entry name" value="Ribonuclease H-like"/>
    <property type="match status" value="1"/>
</dbReference>
<comment type="subcellular location">
    <subcellularLocation>
        <location evidence="3">Membrane</location>
        <topology evidence="3">Single-pass membrane protein</topology>
    </subcellularLocation>
</comment>
<comment type="similarity">
    <text evidence="3">Belongs to the FAM200 family.</text>
</comment>
<organism>
    <name type="scientific">Macaca fascicularis</name>
    <name type="common">Crab-eating macaque</name>
    <name type="synonym">Cynomolgus monkey</name>
    <dbReference type="NCBI Taxonomy" id="9541"/>
    <lineage>
        <taxon>Eukaryota</taxon>
        <taxon>Metazoa</taxon>
        <taxon>Chordata</taxon>
        <taxon>Craniata</taxon>
        <taxon>Vertebrata</taxon>
        <taxon>Euteleostomi</taxon>
        <taxon>Mammalia</taxon>
        <taxon>Eutheria</taxon>
        <taxon>Euarchontoglires</taxon>
        <taxon>Primates</taxon>
        <taxon>Haplorrhini</taxon>
        <taxon>Catarrhini</taxon>
        <taxon>Cercopithecidae</taxon>
        <taxon>Cercopithecinae</taxon>
        <taxon>Macaca</taxon>
    </lineage>
</organism>
<feature type="chain" id="PRO_0000279406" description="Protein FAM200A">
    <location>
        <begin position="1"/>
        <end position="573"/>
    </location>
</feature>
<feature type="topological domain" description="Extracellular" evidence="1">
    <location>
        <begin position="1"/>
        <end position="513"/>
    </location>
</feature>
<feature type="transmembrane region" description="Helical" evidence="1">
    <location>
        <begin position="514"/>
        <end position="533"/>
    </location>
</feature>
<feature type="topological domain" description="Cytoplasmic" evidence="1">
    <location>
        <begin position="534"/>
        <end position="573"/>
    </location>
</feature>
<feature type="region of interest" description="Disordered" evidence="2">
    <location>
        <begin position="1"/>
        <end position="51"/>
    </location>
</feature>
<evidence type="ECO:0000255" key="1"/>
<evidence type="ECO:0000256" key="2">
    <source>
        <dbReference type="SAM" id="MobiDB-lite"/>
    </source>
</evidence>
<evidence type="ECO:0000305" key="3"/>
<gene>
    <name type="primary">FAM200A</name>
    <name type="ORF">QtsA-17507</name>
</gene>
<reference key="1">
    <citation type="submission" date="2005-06" db="EMBL/GenBank/DDBJ databases">
        <title>DNA sequences of macaque genes expressed in brain or testis and its evolutionary implications.</title>
        <authorList>
            <consortium name="International consortium for macaque cDNA sequencing and analysis"/>
        </authorList>
    </citation>
    <scope>NUCLEOTIDE SEQUENCE [LARGE SCALE MRNA]</scope>
    <source>
        <tissue>Testis</tissue>
    </source>
</reference>
<proteinExistence type="evidence at transcript level"/>
<protein>
    <recommendedName>
        <fullName>Protein FAM200A</fullName>
    </recommendedName>
</protein>
<accession>Q4R6P1</accession>
<keyword id="KW-0472">Membrane</keyword>
<keyword id="KW-1185">Reference proteome</keyword>
<keyword id="KW-0812">Transmembrane</keyword>
<keyword id="KW-1133">Transmembrane helix</keyword>
<sequence length="573" mass="66296">MTPESRDTTDLSPRGTQEMEGIVVVKVEEEDEEDHFQKQRNKVESSPQVLSRSTTMNERALLSSYLVAYRVAKEKMAHTAAEKIILPACMDMVRTIFDDKSADKLRTIPLSDNTISRRICTIAKHLEAMLITRLQSGIDFAIQLDESTDIASCPTLLVYVRYVWQDDFVEDLLCCLNLNSHITGLDLFTELENCIVGQYKLNWKHCKGISSDGAANMTGKHSRLTEKLLEATHNNALWNHCFIHREALVSKEISPSLMDVLKKAVKIVNFIKGSSLNSRLLEILCSEIGVNHTHLLFHTEVRWLSQGKVLSRVYELRNEIYIFLIEKQSHLANIFENDIWVTKLAYLSDIFGILNELNLKIQGKNNDIFQYLEHILGFQKTLLFWQARLKSNRPSYYMFPTLLQHIEENIINEDCLKEIKLEILLHLTSLSQTFNYYFPEEKFESLKENIWMKDPFAFQNPASIIKLNLEPEEENELLQLSSSFTLKNYYKTLSLSAFWIKIKDEFPLLSRKSISLLLPFTTTYLCELGFSILTRLKTKKRNRLNSAPDMRVALSSCVPDWKELMNRQAHPSH</sequence>